<accession>Q97VS5</accession>
<keyword id="KW-0963">Cytoplasm</keyword>
<keyword id="KW-0210">Decarboxylase</keyword>
<keyword id="KW-0312">Gluconeogenesis</keyword>
<keyword id="KW-0342">GTP-binding</keyword>
<keyword id="KW-0456">Lyase</keyword>
<keyword id="KW-0464">Manganese</keyword>
<keyword id="KW-0479">Metal-binding</keyword>
<keyword id="KW-0547">Nucleotide-binding</keyword>
<keyword id="KW-1185">Reference proteome</keyword>
<proteinExistence type="inferred from homology"/>
<protein>
    <recommendedName>
        <fullName evidence="1">Phosphoenolpyruvate carboxykinase [GTP]</fullName>
        <shortName evidence="1">PEP carboxykinase</shortName>
        <shortName evidence="1">PEPCK</shortName>
        <ecNumber evidence="1">4.1.1.32</ecNumber>
    </recommendedName>
</protein>
<comment type="function">
    <text evidence="1">Catalyzes the conversion of oxaloacetate (OAA) to phosphoenolpyruvate (PEP), the rate-limiting step in the metabolic pathway that produces glucose from lactate and other precursors derived from the citric acid cycle.</text>
</comment>
<comment type="catalytic activity">
    <reaction evidence="1">
        <text>oxaloacetate + GTP = phosphoenolpyruvate + GDP + CO2</text>
        <dbReference type="Rhea" id="RHEA:10388"/>
        <dbReference type="ChEBI" id="CHEBI:16452"/>
        <dbReference type="ChEBI" id="CHEBI:16526"/>
        <dbReference type="ChEBI" id="CHEBI:37565"/>
        <dbReference type="ChEBI" id="CHEBI:58189"/>
        <dbReference type="ChEBI" id="CHEBI:58702"/>
        <dbReference type="EC" id="4.1.1.32"/>
    </reaction>
</comment>
<comment type="cofactor">
    <cofactor evidence="1">
        <name>Mn(2+)</name>
        <dbReference type="ChEBI" id="CHEBI:29035"/>
    </cofactor>
    <text evidence="1">Binds 1 Mn(2+) ion per subunit.</text>
</comment>
<comment type="pathway">
    <text evidence="1">Carbohydrate biosynthesis; gluconeogenesis.</text>
</comment>
<comment type="subcellular location">
    <subcellularLocation>
        <location evidence="1">Cytoplasm</location>
    </subcellularLocation>
</comment>
<comment type="similarity">
    <text evidence="1">Belongs to the phosphoenolpyruvate carboxykinase [GTP] family.</text>
</comment>
<sequence length="603" mass="69057">MKSSLDFLNNFIQRDAVKKLESINNYPLIEFLNSVVKLCEPDSVYLITGSDEEKEYIRKKALESKEEIRLQTSGHTIHFDHPLDQARAREDTFILSDTKIPYVNTKPRNEGLSEMLTLLKGSMRGREMYVGFYSLGPRNSPFQILAVQVTDSPYVIHSENILYRIAFEDFSNNTKFLRFVHSKGEPDIKKRRIMIDLANNTVYSVNTTYAGNSVGLKKLALRLTIMKAVEEGWLSEHMAIVGFNGDKGIHYFTASFPSGSGKTSTSMIGNLISDDLAFIREFEGLPKAVNPEIGVFGIIQGINARDDPIIWEVLHKPGEVIFSNVLMTEDGDVYWEGSELPKPERGYNHEGRWDRESGKPASHPNARFTVPLTSFSNLDKNWDNPNGVIIDGIIFGVRDYSTLVPVVEAFSWSHGVITIGASMESARTSAVIGKSDELEFNPMAILDFMPISLSRYLRNYLNFGKRLRKSPKIFGFNYFLKDDNKFLNSKEDKKVWVSWAVKRVEETANAIYTPIGLIPFYEDLKALFKRVLGKEYGKEEYEKQFTIKLRKYLEKTERIIEIYLKFEDIPSEVINELKMQKERIVDYINKYGDSVSPFRLEKD</sequence>
<evidence type="ECO:0000255" key="1">
    <source>
        <dbReference type="HAMAP-Rule" id="MF_00452"/>
    </source>
</evidence>
<name>PCKG_SACS2</name>
<gene>
    <name evidence="1" type="primary">pckG</name>
    <name type="ordered locus">SSO2537</name>
</gene>
<feature type="chain" id="PRO_0000103622" description="Phosphoenolpyruvate carboxykinase [GTP]">
    <location>
        <begin position="1"/>
        <end position="603"/>
    </location>
</feature>
<feature type="active site" evidence="1">
    <location>
        <position position="260"/>
    </location>
</feature>
<feature type="binding site" evidence="1">
    <location>
        <position position="87"/>
    </location>
    <ligand>
        <name>substrate</name>
    </ligand>
</feature>
<feature type="binding site" evidence="1">
    <location>
        <begin position="209"/>
        <end position="211"/>
    </location>
    <ligand>
        <name>substrate</name>
    </ligand>
</feature>
<feature type="binding site" evidence="1">
    <location>
        <position position="218"/>
    </location>
    <ligand>
        <name>Mn(2+)</name>
        <dbReference type="ChEBI" id="CHEBI:29035"/>
    </ligand>
</feature>
<feature type="binding site" evidence="1">
    <location>
        <position position="237"/>
    </location>
    <ligand>
        <name>Mn(2+)</name>
        <dbReference type="ChEBI" id="CHEBI:29035"/>
    </ligand>
</feature>
<feature type="binding site" evidence="1">
    <location>
        <position position="258"/>
    </location>
    <ligand>
        <name>substrate</name>
    </ligand>
</feature>
<feature type="binding site" evidence="1">
    <location>
        <begin position="259"/>
        <end position="264"/>
    </location>
    <ligand>
        <name>GTP</name>
        <dbReference type="ChEBI" id="CHEBI:37565"/>
    </ligand>
</feature>
<feature type="binding site" evidence="1">
    <location>
        <position position="275"/>
    </location>
    <ligand>
        <name>Mn(2+)</name>
        <dbReference type="ChEBI" id="CHEBI:29035"/>
    </ligand>
</feature>
<feature type="binding site" evidence="1">
    <location>
        <begin position="365"/>
        <end position="367"/>
    </location>
    <ligand>
        <name>substrate</name>
    </ligand>
</feature>
<feature type="binding site" evidence="1">
    <location>
        <position position="367"/>
    </location>
    <ligand>
        <name>GTP</name>
        <dbReference type="ChEBI" id="CHEBI:37565"/>
    </ligand>
</feature>
<feature type="binding site" evidence="1">
    <location>
        <position position="398"/>
    </location>
    <ligand>
        <name>GTP</name>
        <dbReference type="ChEBI" id="CHEBI:37565"/>
    </ligand>
</feature>
<dbReference type="EC" id="4.1.1.32" evidence="1"/>
<dbReference type="EMBL" id="AE006641">
    <property type="protein sequence ID" value="AAK42666.1"/>
    <property type="molecule type" value="Genomic_DNA"/>
</dbReference>
<dbReference type="PIR" id="C90426">
    <property type="entry name" value="C90426"/>
</dbReference>
<dbReference type="RefSeq" id="WP_009990986.1">
    <property type="nucleotide sequence ID" value="NC_002754.1"/>
</dbReference>
<dbReference type="SMR" id="Q97VS5"/>
<dbReference type="FunCoup" id="Q97VS5">
    <property type="interactions" value="99"/>
</dbReference>
<dbReference type="STRING" id="273057.SSO2537"/>
<dbReference type="PaxDb" id="273057-SSO2537"/>
<dbReference type="EnsemblBacteria" id="AAK42666">
    <property type="protein sequence ID" value="AAK42666"/>
    <property type="gene ID" value="SSO2537"/>
</dbReference>
<dbReference type="KEGG" id="sso:SSO2537"/>
<dbReference type="PATRIC" id="fig|273057.12.peg.2613"/>
<dbReference type="eggNOG" id="arCOG05865">
    <property type="taxonomic scope" value="Archaea"/>
</dbReference>
<dbReference type="HOGENOM" id="CLU_028872_1_1_2"/>
<dbReference type="InParanoid" id="Q97VS5"/>
<dbReference type="PhylomeDB" id="Q97VS5"/>
<dbReference type="BRENDA" id="4.1.1.32">
    <property type="organism ID" value="6163"/>
</dbReference>
<dbReference type="UniPathway" id="UPA00138"/>
<dbReference type="Proteomes" id="UP000001974">
    <property type="component" value="Chromosome"/>
</dbReference>
<dbReference type="GO" id="GO:0005829">
    <property type="term" value="C:cytosol"/>
    <property type="evidence" value="ECO:0000318"/>
    <property type="project" value="GO_Central"/>
</dbReference>
<dbReference type="GO" id="GO:0005525">
    <property type="term" value="F:GTP binding"/>
    <property type="evidence" value="ECO:0007669"/>
    <property type="project" value="UniProtKB-UniRule"/>
</dbReference>
<dbReference type="GO" id="GO:0030145">
    <property type="term" value="F:manganese ion binding"/>
    <property type="evidence" value="ECO:0000318"/>
    <property type="project" value="GO_Central"/>
</dbReference>
<dbReference type="GO" id="GO:0004613">
    <property type="term" value="F:phosphoenolpyruvate carboxykinase (GTP) activity"/>
    <property type="evidence" value="ECO:0000318"/>
    <property type="project" value="GO_Central"/>
</dbReference>
<dbReference type="GO" id="GO:0071333">
    <property type="term" value="P:cellular response to glucose stimulus"/>
    <property type="evidence" value="ECO:0000318"/>
    <property type="project" value="GO_Central"/>
</dbReference>
<dbReference type="GO" id="GO:0006094">
    <property type="term" value="P:gluconeogenesis"/>
    <property type="evidence" value="ECO:0000318"/>
    <property type="project" value="GO_Central"/>
</dbReference>
<dbReference type="GO" id="GO:0046327">
    <property type="term" value="P:glycerol biosynthetic process from pyruvate"/>
    <property type="evidence" value="ECO:0000318"/>
    <property type="project" value="GO_Central"/>
</dbReference>
<dbReference type="GO" id="GO:0006107">
    <property type="term" value="P:oxaloacetate metabolic process"/>
    <property type="evidence" value="ECO:0000318"/>
    <property type="project" value="GO_Central"/>
</dbReference>
<dbReference type="GO" id="GO:0019543">
    <property type="term" value="P:propionate catabolic process"/>
    <property type="evidence" value="ECO:0000318"/>
    <property type="project" value="GO_Central"/>
</dbReference>
<dbReference type="GO" id="GO:0033993">
    <property type="term" value="P:response to lipid"/>
    <property type="evidence" value="ECO:0000318"/>
    <property type="project" value="GO_Central"/>
</dbReference>
<dbReference type="GO" id="GO:0042594">
    <property type="term" value="P:response to starvation"/>
    <property type="evidence" value="ECO:0000318"/>
    <property type="project" value="GO_Central"/>
</dbReference>
<dbReference type="CDD" id="cd00819">
    <property type="entry name" value="PEPCK_GTP"/>
    <property type="match status" value="1"/>
</dbReference>
<dbReference type="FunFam" id="2.170.8.10:FF:000011">
    <property type="entry name" value="Phosphoenolpyruvate carboxykinase [GTP]"/>
    <property type="match status" value="1"/>
</dbReference>
<dbReference type="FunFam" id="3.40.449.10:FF:000010">
    <property type="entry name" value="Phosphoenolpyruvate carboxykinase [GTP]"/>
    <property type="match status" value="1"/>
</dbReference>
<dbReference type="Gene3D" id="3.90.228.20">
    <property type="match status" value="2"/>
</dbReference>
<dbReference type="Gene3D" id="3.40.449.10">
    <property type="entry name" value="Phosphoenolpyruvate Carboxykinase, domain 1"/>
    <property type="match status" value="1"/>
</dbReference>
<dbReference type="Gene3D" id="2.170.8.10">
    <property type="entry name" value="Phosphoenolpyruvate Carboxykinase, domain 2"/>
    <property type="match status" value="1"/>
</dbReference>
<dbReference type="HAMAP" id="MF_00452">
    <property type="entry name" value="PEPCK_GTP"/>
    <property type="match status" value="1"/>
</dbReference>
<dbReference type="InterPro" id="IPR013035">
    <property type="entry name" value="PEP_carboxykinase_C"/>
</dbReference>
<dbReference type="InterPro" id="IPR008209">
    <property type="entry name" value="PEP_carboxykinase_GTP"/>
</dbReference>
<dbReference type="InterPro" id="IPR035077">
    <property type="entry name" value="PEP_carboxykinase_GTP_C"/>
</dbReference>
<dbReference type="InterPro" id="IPR035078">
    <property type="entry name" value="PEP_carboxykinase_GTP_N"/>
</dbReference>
<dbReference type="InterPro" id="IPR008210">
    <property type="entry name" value="PEP_carboxykinase_N"/>
</dbReference>
<dbReference type="NCBIfam" id="NF003253">
    <property type="entry name" value="PRK04210.1"/>
    <property type="match status" value="1"/>
</dbReference>
<dbReference type="PANTHER" id="PTHR11561">
    <property type="entry name" value="PHOSPHOENOLPYRUVATE CARBOXYKINASE"/>
    <property type="match status" value="1"/>
</dbReference>
<dbReference type="PANTHER" id="PTHR11561:SF0">
    <property type="entry name" value="PHOSPHOENOLPYRUVATE CARBOXYKINASE [GTP]-RELATED"/>
    <property type="match status" value="1"/>
</dbReference>
<dbReference type="Pfam" id="PF00821">
    <property type="entry name" value="PEPCK_GTP"/>
    <property type="match status" value="1"/>
</dbReference>
<dbReference type="Pfam" id="PF17297">
    <property type="entry name" value="PEPCK_N"/>
    <property type="match status" value="1"/>
</dbReference>
<dbReference type="PIRSF" id="PIRSF001348">
    <property type="entry name" value="PEP_carboxykinase_GTP"/>
    <property type="match status" value="1"/>
</dbReference>
<dbReference type="SUPFAM" id="SSF68923">
    <property type="entry name" value="PEP carboxykinase N-terminal domain"/>
    <property type="match status" value="1"/>
</dbReference>
<dbReference type="SUPFAM" id="SSF53795">
    <property type="entry name" value="PEP carboxykinase-like"/>
    <property type="match status" value="1"/>
</dbReference>
<reference key="1">
    <citation type="journal article" date="2001" name="Proc. Natl. Acad. Sci. U.S.A.">
        <title>The complete genome of the crenarchaeon Sulfolobus solfataricus P2.</title>
        <authorList>
            <person name="She Q."/>
            <person name="Singh R.K."/>
            <person name="Confalonieri F."/>
            <person name="Zivanovic Y."/>
            <person name="Allard G."/>
            <person name="Awayez M.J."/>
            <person name="Chan-Weiher C.C.-Y."/>
            <person name="Clausen I.G."/>
            <person name="Curtis B.A."/>
            <person name="De Moors A."/>
            <person name="Erauso G."/>
            <person name="Fletcher C."/>
            <person name="Gordon P.M.K."/>
            <person name="Heikamp-de Jong I."/>
            <person name="Jeffries A.C."/>
            <person name="Kozera C.J."/>
            <person name="Medina N."/>
            <person name="Peng X."/>
            <person name="Thi-Ngoc H.P."/>
            <person name="Redder P."/>
            <person name="Schenk M.E."/>
            <person name="Theriault C."/>
            <person name="Tolstrup N."/>
            <person name="Charlebois R.L."/>
            <person name="Doolittle W.F."/>
            <person name="Duguet M."/>
            <person name="Gaasterland T."/>
            <person name="Garrett R.A."/>
            <person name="Ragan M.A."/>
            <person name="Sensen C.W."/>
            <person name="Van der Oost J."/>
        </authorList>
    </citation>
    <scope>NUCLEOTIDE SEQUENCE [LARGE SCALE GENOMIC DNA]</scope>
    <source>
        <strain>ATCC 35092 / DSM 1617 / JCM 11322 / P2</strain>
    </source>
</reference>
<organism>
    <name type="scientific">Saccharolobus solfataricus (strain ATCC 35092 / DSM 1617 / JCM 11322 / P2)</name>
    <name type="common">Sulfolobus solfataricus</name>
    <dbReference type="NCBI Taxonomy" id="273057"/>
    <lineage>
        <taxon>Archaea</taxon>
        <taxon>Thermoproteota</taxon>
        <taxon>Thermoprotei</taxon>
        <taxon>Sulfolobales</taxon>
        <taxon>Sulfolobaceae</taxon>
        <taxon>Saccharolobus</taxon>
    </lineage>
</organism>